<reference key="1">
    <citation type="submission" date="2007-11" db="EMBL/GenBank/DDBJ databases">
        <title>Complete sequence of chromosome of Shewanella baltica OS195.</title>
        <authorList>
            <consortium name="US DOE Joint Genome Institute"/>
            <person name="Copeland A."/>
            <person name="Lucas S."/>
            <person name="Lapidus A."/>
            <person name="Barry K."/>
            <person name="Glavina del Rio T."/>
            <person name="Dalin E."/>
            <person name="Tice H."/>
            <person name="Pitluck S."/>
            <person name="Chain P."/>
            <person name="Malfatti S."/>
            <person name="Shin M."/>
            <person name="Vergez L."/>
            <person name="Schmutz J."/>
            <person name="Larimer F."/>
            <person name="Land M."/>
            <person name="Hauser L."/>
            <person name="Kyrpides N."/>
            <person name="Kim E."/>
            <person name="Brettar I."/>
            <person name="Rodrigues J."/>
            <person name="Konstantinidis K."/>
            <person name="Klappenbach J."/>
            <person name="Hofle M."/>
            <person name="Tiedje J."/>
            <person name="Richardson P."/>
        </authorList>
    </citation>
    <scope>NUCLEOTIDE SEQUENCE [LARGE SCALE GENOMIC DNA]</scope>
    <source>
        <strain>OS195</strain>
    </source>
</reference>
<name>XNI_SHEB9</name>
<gene>
    <name evidence="1" type="primary">xni</name>
    <name evidence="1" type="synonym">ygdG</name>
    <name type="ordered locus">Sbal195_1396</name>
</gene>
<proteinExistence type="inferred from homology"/>
<protein>
    <recommendedName>
        <fullName evidence="1">Flap endonuclease Xni</fullName>
        <shortName evidence="1">FEN</shortName>
        <ecNumber evidence="1">3.1.-.-</ecNumber>
    </recommendedName>
</protein>
<keyword id="KW-0238">DNA-binding</keyword>
<keyword id="KW-0255">Endonuclease</keyword>
<keyword id="KW-0378">Hydrolase</keyword>
<keyword id="KW-0460">Magnesium</keyword>
<keyword id="KW-0479">Metal-binding</keyword>
<keyword id="KW-0540">Nuclease</keyword>
<keyword id="KW-0630">Potassium</keyword>
<organism>
    <name type="scientific">Shewanella baltica (strain OS195)</name>
    <dbReference type="NCBI Taxonomy" id="399599"/>
    <lineage>
        <taxon>Bacteria</taxon>
        <taxon>Pseudomonadati</taxon>
        <taxon>Pseudomonadota</taxon>
        <taxon>Gammaproteobacteria</taxon>
        <taxon>Alteromonadales</taxon>
        <taxon>Shewanellaceae</taxon>
        <taxon>Shewanella</taxon>
    </lineage>
</organism>
<feature type="chain" id="PRO_1000085476" description="Flap endonuclease Xni">
    <location>
        <begin position="1"/>
        <end position="262"/>
    </location>
</feature>
<feature type="domain" description="5'-3' exonuclease" evidence="1">
    <location>
        <begin position="162"/>
        <end position="254"/>
    </location>
</feature>
<feature type="region of interest" description="Interaction with DNA" evidence="1">
    <location>
        <begin position="185"/>
        <end position="190"/>
    </location>
</feature>
<feature type="binding site" evidence="1">
    <location>
        <position position="105"/>
    </location>
    <ligand>
        <name>Mg(2+)</name>
        <dbReference type="ChEBI" id="CHEBI:18420"/>
    </ligand>
</feature>
<feature type="binding site" evidence="1">
    <location>
        <position position="172"/>
    </location>
    <ligand>
        <name>K(+)</name>
        <dbReference type="ChEBI" id="CHEBI:29103"/>
    </ligand>
</feature>
<feature type="binding site" evidence="1">
    <location>
        <position position="173"/>
    </location>
    <ligand>
        <name>K(+)</name>
        <dbReference type="ChEBI" id="CHEBI:29103"/>
    </ligand>
</feature>
<feature type="binding site" evidence="1">
    <location>
        <position position="181"/>
    </location>
    <ligand>
        <name>K(+)</name>
        <dbReference type="ChEBI" id="CHEBI:29103"/>
    </ligand>
</feature>
<feature type="binding site" evidence="1">
    <location>
        <position position="183"/>
    </location>
    <ligand>
        <name>K(+)</name>
        <dbReference type="ChEBI" id="CHEBI:29103"/>
    </ligand>
</feature>
<feature type="binding site" evidence="1">
    <location>
        <position position="186"/>
    </location>
    <ligand>
        <name>K(+)</name>
        <dbReference type="ChEBI" id="CHEBI:29103"/>
    </ligand>
</feature>
<comment type="function">
    <text evidence="1">Has flap endonuclease activity. During DNA replication, flap endonucleases cleave the 5'-overhanging flap structure that is generated by displacement synthesis when DNA polymerase encounters the 5'-end of a downstream Okazaki fragment.</text>
</comment>
<comment type="cofactor">
    <cofactor evidence="1">
        <name>Mg(2+)</name>
        <dbReference type="ChEBI" id="CHEBI:18420"/>
    </cofactor>
    <text evidence="1">Binds 2 Mg(2+) per subunit. Only one magnesium ion has a direct interaction with the protein, the other interactions are indirect.</text>
</comment>
<comment type="cofactor">
    <cofactor evidence="1">
        <name>K(+)</name>
        <dbReference type="ChEBI" id="CHEBI:29103"/>
    </cofactor>
    <text evidence="1">Binds 1 K(+) per subunit. The potassium ion strongly increases the affinity for DNA.</text>
</comment>
<comment type="similarity">
    <text evidence="1">Belongs to the Xni family.</text>
</comment>
<evidence type="ECO:0000255" key="1">
    <source>
        <dbReference type="HAMAP-Rule" id="MF_01192"/>
    </source>
</evidence>
<dbReference type="EC" id="3.1.-.-" evidence="1"/>
<dbReference type="EMBL" id="CP000891">
    <property type="protein sequence ID" value="ABX48570.1"/>
    <property type="molecule type" value="Genomic_DNA"/>
</dbReference>
<dbReference type="RefSeq" id="WP_012196803.1">
    <property type="nucleotide sequence ID" value="NC_009997.1"/>
</dbReference>
<dbReference type="SMR" id="A9KTM9"/>
<dbReference type="GeneID" id="11771652"/>
<dbReference type="KEGG" id="sbn:Sbal195_1396"/>
<dbReference type="HOGENOM" id="CLU_004675_1_2_6"/>
<dbReference type="Proteomes" id="UP000000770">
    <property type="component" value="Chromosome"/>
</dbReference>
<dbReference type="GO" id="GO:0008409">
    <property type="term" value="F:5'-3' exonuclease activity"/>
    <property type="evidence" value="ECO:0007669"/>
    <property type="project" value="InterPro"/>
</dbReference>
<dbReference type="GO" id="GO:0017108">
    <property type="term" value="F:5'-flap endonuclease activity"/>
    <property type="evidence" value="ECO:0007669"/>
    <property type="project" value="UniProtKB-UniRule"/>
</dbReference>
<dbReference type="GO" id="GO:0003677">
    <property type="term" value="F:DNA binding"/>
    <property type="evidence" value="ECO:0007669"/>
    <property type="project" value="UniProtKB-UniRule"/>
</dbReference>
<dbReference type="GO" id="GO:0000287">
    <property type="term" value="F:magnesium ion binding"/>
    <property type="evidence" value="ECO:0007669"/>
    <property type="project" value="UniProtKB-UniRule"/>
</dbReference>
<dbReference type="GO" id="GO:0030955">
    <property type="term" value="F:potassium ion binding"/>
    <property type="evidence" value="ECO:0007669"/>
    <property type="project" value="UniProtKB-UniRule"/>
</dbReference>
<dbReference type="GO" id="GO:0033567">
    <property type="term" value="P:DNA replication, Okazaki fragment processing"/>
    <property type="evidence" value="ECO:0007669"/>
    <property type="project" value="UniProtKB-UniRule"/>
</dbReference>
<dbReference type="CDD" id="cd09898">
    <property type="entry name" value="H3TH_53EXO"/>
    <property type="match status" value="1"/>
</dbReference>
<dbReference type="CDD" id="cd09859">
    <property type="entry name" value="PIN_53EXO"/>
    <property type="match status" value="1"/>
</dbReference>
<dbReference type="FunFam" id="1.10.150.20:FF:000003">
    <property type="entry name" value="DNA polymerase I"/>
    <property type="match status" value="1"/>
</dbReference>
<dbReference type="Gene3D" id="1.10.150.20">
    <property type="entry name" value="5' to 3' exonuclease, C-terminal subdomain"/>
    <property type="match status" value="1"/>
</dbReference>
<dbReference type="Gene3D" id="3.40.50.1010">
    <property type="entry name" value="5'-nuclease"/>
    <property type="match status" value="1"/>
</dbReference>
<dbReference type="HAMAP" id="MF_01192">
    <property type="entry name" value="Xni"/>
    <property type="match status" value="1"/>
</dbReference>
<dbReference type="InterPro" id="IPR020046">
    <property type="entry name" value="5-3_exonucl_a-hlix_arch_N"/>
</dbReference>
<dbReference type="InterPro" id="IPR002421">
    <property type="entry name" value="5-3_exonuclease"/>
</dbReference>
<dbReference type="InterPro" id="IPR036279">
    <property type="entry name" value="5-3_exonuclease_C_sf"/>
</dbReference>
<dbReference type="InterPro" id="IPR020045">
    <property type="entry name" value="DNA_polI_H3TH"/>
</dbReference>
<dbReference type="InterPro" id="IPR038969">
    <property type="entry name" value="FEN"/>
</dbReference>
<dbReference type="InterPro" id="IPR008918">
    <property type="entry name" value="HhH2"/>
</dbReference>
<dbReference type="InterPro" id="IPR029060">
    <property type="entry name" value="PIN-like_dom_sf"/>
</dbReference>
<dbReference type="InterPro" id="IPR022895">
    <property type="entry name" value="Xni"/>
</dbReference>
<dbReference type="NCBIfam" id="NF007017">
    <property type="entry name" value="PRK09482.1"/>
    <property type="match status" value="1"/>
</dbReference>
<dbReference type="PANTHER" id="PTHR42646:SF2">
    <property type="entry name" value="5'-3' EXONUCLEASE FAMILY PROTEIN"/>
    <property type="match status" value="1"/>
</dbReference>
<dbReference type="PANTHER" id="PTHR42646">
    <property type="entry name" value="FLAP ENDONUCLEASE XNI"/>
    <property type="match status" value="1"/>
</dbReference>
<dbReference type="Pfam" id="PF01367">
    <property type="entry name" value="5_3_exonuc"/>
    <property type="match status" value="1"/>
</dbReference>
<dbReference type="Pfam" id="PF02739">
    <property type="entry name" value="5_3_exonuc_N"/>
    <property type="match status" value="1"/>
</dbReference>
<dbReference type="SMART" id="SM00475">
    <property type="entry name" value="53EXOc"/>
    <property type="match status" value="1"/>
</dbReference>
<dbReference type="SMART" id="SM00279">
    <property type="entry name" value="HhH2"/>
    <property type="match status" value="1"/>
</dbReference>
<dbReference type="SUPFAM" id="SSF47807">
    <property type="entry name" value="5' to 3' exonuclease, C-terminal subdomain"/>
    <property type="match status" value="1"/>
</dbReference>
<dbReference type="SUPFAM" id="SSF88723">
    <property type="entry name" value="PIN domain-like"/>
    <property type="match status" value="1"/>
</dbReference>
<sequence length="262" mass="29031">MNKFLIIDGLNLVRRIYAAIPDETDMQSLTERVSSACTKLLRVHRPTHVAIVWDGDEISWRKQLYPDYKKGRKPMPEPLAQGLVALQDHLTAMHIGSIYAAAEADDVIATLAIKTAKAQGEAIIVSTDKGFSQLNHRQISQWDHFNQQYLDIAALEQKLGVERSQFLDLMALAGDSGNKIPGIAGIGPKSAAELLKTFRSLPTLFSSLSNLGAKQAKKLAEGKEMARLSYKLAQLQTDLPLNINLKDFRVIDSLPEKTINQD</sequence>
<accession>A9KTM9</accession>